<proteinExistence type="evidence at protein level"/>
<name>H2B3_CHLRE</name>
<feature type="initiator methionine" description="Removed" evidence="5">
    <location>
        <position position="1"/>
    </location>
</feature>
<feature type="chain" id="PRO_0000071912" description="Histone H2B.3">
    <location>
        <begin position="2"/>
        <end position="153"/>
    </location>
</feature>
<feature type="region of interest" description="Disordered" evidence="2">
    <location>
        <begin position="1"/>
        <end position="60"/>
    </location>
</feature>
<feature type="compositionally biased region" description="Basic and acidic residues" evidence="2">
    <location>
        <begin position="1"/>
        <end position="10"/>
    </location>
</feature>
<feature type="compositionally biased region" description="Basic and acidic residues" evidence="2">
    <location>
        <begin position="20"/>
        <end position="54"/>
    </location>
</feature>
<feature type="modified residue" description="N6-acetyllysine" evidence="1">
    <location>
        <position position="41"/>
    </location>
</feature>
<feature type="modified residue" description="N6-acetyllysine" evidence="1">
    <location>
        <position position="42"/>
    </location>
</feature>
<feature type="cross-link" description="Glycyl lysine isopeptide (Lys-Gly) (interchain with G-Cter in ubiquitin)" evidence="1">
    <location>
        <position position="149"/>
    </location>
</feature>
<comment type="function">
    <text>Core component of nucleosome. Nucleosomes wrap and compact DNA into chromatin, limiting DNA accessibility to the cellular machineries which require DNA as a template. Histones thereby play a central role in transcription regulation, DNA repair, DNA replication and chromosomal stability. DNA accessibility is regulated via a complex set of post-translational modifications of histones, also called histone code, and nucleosome remodeling.</text>
</comment>
<comment type="subunit">
    <text>The nucleosome is a histone octamer containing two molecules each of H2A, H2B, H3 and H4 assembled in one H3-H4 heterotetramer and two H2A-H2B heterodimers. The octamer wraps approximately 147 bp of DNA.</text>
</comment>
<comment type="subcellular location">
    <subcellularLocation>
        <location>Nucleus</location>
    </subcellularLocation>
    <subcellularLocation>
        <location>Chromosome</location>
    </subcellularLocation>
</comment>
<comment type="developmental stage">
    <text evidence="4">Up-regulated during the dark period.</text>
</comment>
<comment type="PTM">
    <text>The N-terminus is blocked.</text>
</comment>
<comment type="PTM">
    <text evidence="1 3 4">Can be acetylated to form H2BK33ac and H2BK34ac (By similarity). Acetylated mainly on the ubiquitinated form.</text>
</comment>
<comment type="PTM">
    <text>Monoubiquitinated to form H2BK143ub1; which is increased during the light period and may give a specific tag for epigenetic transcriptional activation.</text>
</comment>
<comment type="similarity">
    <text evidence="5">Belongs to the histone H2B family.</text>
</comment>
<comment type="caution">
    <text evidence="5">To ensure consistency between histone entries, we follow the 'Brno' nomenclature for histone modifications, with positions referring to those used in the literature for the 'closest' model organism. Due to slight variations in histone sequences between organisms and to the presence of initiator methionine in UniProtKB/Swiss-Prot sequences, the actual positions of modified amino acids in the sequence generally differ. In this entry the following conventions are used: H2BK33ac = acetylated Lys-41; H2BK34ac = acetylated Lys-42; H2BK143ub1 = monoubiquitinated Lys-149.</text>
</comment>
<organism>
    <name type="scientific">Chlamydomonas reinhardtii</name>
    <name type="common">Chlamydomonas smithii</name>
    <dbReference type="NCBI Taxonomy" id="3055"/>
    <lineage>
        <taxon>Eukaryota</taxon>
        <taxon>Viridiplantae</taxon>
        <taxon>Chlorophyta</taxon>
        <taxon>core chlorophytes</taxon>
        <taxon>Chlorophyceae</taxon>
        <taxon>CS clade</taxon>
        <taxon>Chlamydomonadales</taxon>
        <taxon>Chlamydomonadaceae</taxon>
        <taxon>Chlamydomonas</taxon>
    </lineage>
</organism>
<reference key="1">
    <citation type="journal article" date="1995" name="Curr. Genet.">
        <title>The organization structure and regulatory elements of Chlamydomonas histone genes reveal features linking plant and animal genes.</title>
        <authorList>
            <person name="Fabry S."/>
            <person name="Mueller K."/>
            <person name="Lindauer A."/>
            <person name="Park P.B."/>
            <person name="Cornelius T."/>
            <person name="Schmitt R."/>
        </authorList>
    </citation>
    <scope>NUCLEOTIDE SEQUENCE [GENOMIC DNA]</scope>
</reference>
<reference key="2">
    <citation type="journal article" date="1992" name="Arch. Biochem. Biophys.">
        <title>Purification of Chlamydomonas 28-kDa ubiquitinated protein and its identification as ubiquitinated histone H2B.</title>
        <authorList>
            <person name="Shimogawara K."/>
            <person name="Muto S."/>
        </authorList>
    </citation>
    <scope>PROTEIN SEQUENCE OF 61-101 AND 106-152</scope>
    <scope>UBIQUITINATION AT LYS-149</scope>
    <source>
        <strain>cw15</strain>
    </source>
</reference>
<reference key="3">
    <citation type="journal article" date="1995" name="Plant Physiol.">
        <title>Histones of Chlamydomonas reinhardtii. Synthesis, acetylation, and methylation.</title>
        <authorList>
            <person name="Waterborg J.H."/>
            <person name="Robertson A.J."/>
            <person name="Tatar D.L."/>
            <person name="Borza C.M."/>
            <person name="Davie J.R."/>
        </authorList>
    </citation>
    <scope>UBIQUITINATION</scope>
    <scope>ACETYLATION</scope>
    <scope>DEVELOPMENTAL STAGE</scope>
    <source>
        <strain>cw15</strain>
    </source>
</reference>
<evidence type="ECO:0000250" key="1"/>
<evidence type="ECO:0000256" key="2">
    <source>
        <dbReference type="SAM" id="MobiDB-lite"/>
    </source>
</evidence>
<evidence type="ECO:0000269" key="3">
    <source>
    </source>
</evidence>
<evidence type="ECO:0000269" key="4">
    <source>
    </source>
</evidence>
<evidence type="ECO:0000305" key="5"/>
<accession>P54346</accession>
<protein>
    <recommendedName>
        <fullName>Histone H2B.3</fullName>
    </recommendedName>
    <alternativeName>
        <fullName>H2B-III</fullName>
    </alternativeName>
</protein>
<sequence>MAPKKDEKPATAEAGAEAPAKAEAKPKAEKAGKKAKKEPAKKAAKEPKGDGEKKDKKKKKSAVETYKLYIYKVLKQVHPDTGISSKAMSIMNSFINDIFEKVATEASKLSRYNKKPTVTSREIQTAVRLVLPGELAKHAVSEGTKAVTKFTSG</sequence>
<dbReference type="EMBL" id="U16725">
    <property type="protein sequence ID" value="AAA98450.1"/>
    <property type="molecule type" value="Genomic_DNA"/>
</dbReference>
<dbReference type="PIR" id="S59587">
    <property type="entry name" value="S59587"/>
</dbReference>
<dbReference type="RefSeq" id="XP_001690724.1">
    <property type="nucleotide sequence ID" value="XM_001690672.1"/>
</dbReference>
<dbReference type="RefSeq" id="XP_001691541.1">
    <property type="nucleotide sequence ID" value="XM_001691489.2"/>
</dbReference>
<dbReference type="SMR" id="P54346"/>
<dbReference type="EnsemblPlants" id="PNW70180">
    <property type="protein sequence ID" value="PNW70180"/>
    <property type="gene ID" value="CHLRE_17g709150v5"/>
</dbReference>
<dbReference type="GeneID" id="5717161"/>
<dbReference type="Gramene" id="PNW70180">
    <property type="protein sequence ID" value="PNW70180"/>
    <property type="gene ID" value="CHLRE_17g709150v5"/>
</dbReference>
<dbReference type="KEGG" id="cre:CHLRE_17g709150v5"/>
<dbReference type="eggNOG" id="KOG1744">
    <property type="taxonomic scope" value="Eukaryota"/>
</dbReference>
<dbReference type="HOGENOM" id="CLU_075666_2_0_1"/>
<dbReference type="OMA" id="KAMGIMS"/>
<dbReference type="OrthoDB" id="2018474at2759"/>
<dbReference type="GO" id="GO:0000786">
    <property type="term" value="C:nucleosome"/>
    <property type="evidence" value="ECO:0007669"/>
    <property type="project" value="UniProtKB-KW"/>
</dbReference>
<dbReference type="GO" id="GO:0005634">
    <property type="term" value="C:nucleus"/>
    <property type="evidence" value="ECO:0007669"/>
    <property type="project" value="UniProtKB-SubCell"/>
</dbReference>
<dbReference type="GO" id="GO:0003677">
    <property type="term" value="F:DNA binding"/>
    <property type="evidence" value="ECO:0007669"/>
    <property type="project" value="UniProtKB-KW"/>
</dbReference>
<dbReference type="GO" id="GO:0046982">
    <property type="term" value="F:protein heterodimerization activity"/>
    <property type="evidence" value="ECO:0007669"/>
    <property type="project" value="InterPro"/>
</dbReference>
<dbReference type="GO" id="GO:0030527">
    <property type="term" value="F:structural constituent of chromatin"/>
    <property type="evidence" value="ECO:0007669"/>
    <property type="project" value="InterPro"/>
</dbReference>
<dbReference type="CDD" id="cd22910">
    <property type="entry name" value="HFD_H2B"/>
    <property type="match status" value="1"/>
</dbReference>
<dbReference type="FunFam" id="1.10.20.10:FF:000014">
    <property type="entry name" value="Histone H2B"/>
    <property type="match status" value="1"/>
</dbReference>
<dbReference type="Gene3D" id="1.10.20.10">
    <property type="entry name" value="Histone, subunit A"/>
    <property type="match status" value="1"/>
</dbReference>
<dbReference type="InterPro" id="IPR009072">
    <property type="entry name" value="Histone-fold"/>
</dbReference>
<dbReference type="InterPro" id="IPR007125">
    <property type="entry name" value="Histone_H2A/H2B/H3"/>
</dbReference>
<dbReference type="InterPro" id="IPR000558">
    <property type="entry name" value="Histone_H2B"/>
</dbReference>
<dbReference type="InterPro" id="IPR055333">
    <property type="entry name" value="HISTONE_H2B_site"/>
</dbReference>
<dbReference type="PANTHER" id="PTHR23428">
    <property type="entry name" value="HISTONE H2B"/>
    <property type="match status" value="1"/>
</dbReference>
<dbReference type="Pfam" id="PF00125">
    <property type="entry name" value="Histone"/>
    <property type="match status" value="1"/>
</dbReference>
<dbReference type="PRINTS" id="PR00621">
    <property type="entry name" value="HISTONEH2B"/>
</dbReference>
<dbReference type="SMART" id="SM00427">
    <property type="entry name" value="H2B"/>
    <property type="match status" value="1"/>
</dbReference>
<dbReference type="SUPFAM" id="SSF47113">
    <property type="entry name" value="Histone-fold"/>
    <property type="match status" value="1"/>
</dbReference>
<dbReference type="PROSITE" id="PS00357">
    <property type="entry name" value="HISTONE_H2B"/>
    <property type="match status" value="1"/>
</dbReference>
<keyword id="KW-0007">Acetylation</keyword>
<keyword id="KW-0158">Chromosome</keyword>
<keyword id="KW-0903">Direct protein sequencing</keyword>
<keyword id="KW-0238">DNA-binding</keyword>
<keyword id="KW-1017">Isopeptide bond</keyword>
<keyword id="KW-0544">Nucleosome core</keyword>
<keyword id="KW-0539">Nucleus</keyword>
<keyword id="KW-0832">Ubl conjugation</keyword>